<keyword id="KW-0378">Hydrolase</keyword>
<keyword id="KW-0479">Metal-binding</keyword>
<keyword id="KW-0511">Multifunctional enzyme</keyword>
<keyword id="KW-0547">Nucleotide-binding</keyword>
<keyword id="KW-0574">Periplasm</keyword>
<keyword id="KW-1185">Reference proteome</keyword>
<keyword id="KW-0732">Signal</keyword>
<feature type="signal peptide" evidence="2">
    <location>
        <begin position="1"/>
        <end position="19"/>
    </location>
</feature>
<feature type="chain" id="PRO_0000000036" description="2',3'-cyclic-nucleotide 2'-phosphodiesterase/3'-nucleotidase">
    <location>
        <begin position="20"/>
        <end position="647"/>
    </location>
</feature>
<feature type="binding site" evidence="1">
    <location>
        <position position="31"/>
    </location>
    <ligand>
        <name>a divalent metal cation</name>
        <dbReference type="ChEBI" id="CHEBI:60240"/>
        <label>1</label>
    </ligand>
</feature>
<feature type="binding site" evidence="1">
    <location>
        <position position="33"/>
    </location>
    <ligand>
        <name>a divalent metal cation</name>
        <dbReference type="ChEBI" id="CHEBI:60240"/>
        <label>1</label>
    </ligand>
</feature>
<feature type="binding site" evidence="1">
    <location>
        <position position="76"/>
    </location>
    <ligand>
        <name>a divalent metal cation</name>
        <dbReference type="ChEBI" id="CHEBI:60240"/>
        <label>1</label>
    </ligand>
</feature>
<feature type="binding site" evidence="1">
    <location>
        <position position="76"/>
    </location>
    <ligand>
        <name>a divalent metal cation</name>
        <dbReference type="ChEBI" id="CHEBI:60240"/>
        <label>2</label>
    </ligand>
</feature>
<feature type="binding site" evidence="1">
    <location>
        <position position="116"/>
    </location>
    <ligand>
        <name>a divalent metal cation</name>
        <dbReference type="ChEBI" id="CHEBI:60240"/>
        <label>2</label>
    </ligand>
</feature>
<feature type="binding site" evidence="1">
    <location>
        <position position="225"/>
    </location>
    <ligand>
        <name>a divalent metal cation</name>
        <dbReference type="ChEBI" id="CHEBI:60240"/>
        <label>2</label>
    </ligand>
</feature>
<feature type="binding site" evidence="1">
    <location>
        <position position="257"/>
    </location>
    <ligand>
        <name>a divalent metal cation</name>
        <dbReference type="ChEBI" id="CHEBI:60240"/>
        <label>2</label>
    </ligand>
</feature>
<feature type="binding site" evidence="1">
    <location>
        <position position="259"/>
    </location>
    <ligand>
        <name>a divalent metal cation</name>
        <dbReference type="ChEBI" id="CHEBI:60240"/>
        <label>1</label>
    </ligand>
</feature>
<feature type="binding site" evidence="1">
    <location>
        <position position="440"/>
    </location>
    <ligand>
        <name>substrate</name>
    </ligand>
</feature>
<feature type="binding site" evidence="1">
    <location>
        <begin position="544"/>
        <end position="550"/>
    </location>
    <ligand>
        <name>substrate</name>
    </ligand>
</feature>
<feature type="sequence conflict" description="In Ref. 2; CAA37956." evidence="3" ref="2">
    <original>G</original>
    <variation>A</variation>
    <location>
        <position position="51"/>
    </location>
</feature>
<feature type="sequence conflict" description="In Ref. 2; CAA37956." evidence="3" ref="2">
    <original>GDYMAA</original>
    <variation>RLYGG</variation>
    <location>
        <begin position="84"/>
        <end position="89"/>
    </location>
</feature>
<feature type="sequence conflict" description="In Ref. 2; CAA37956." evidence="3" ref="2">
    <original>DVH</original>
    <variation>GIQ</variation>
    <location>
        <begin position="96"/>
        <end position="98"/>
    </location>
</feature>
<feature type="sequence conflict" description="In Ref. 2; CAA37956." evidence="3" ref="2">
    <original>A</original>
    <variation>G</variation>
    <location>
        <position position="133"/>
    </location>
</feature>
<feature type="sequence conflict" description="In Ref. 2; CAA37956." evidence="3" ref="2">
    <original>I</original>
    <variation>N</variation>
    <location>
        <position position="174"/>
    </location>
</feature>
<accession>P26265</accession>
<dbReference type="EC" id="3.1.3.6"/>
<dbReference type="EC" id="3.1.4.16"/>
<dbReference type="EMBL" id="AE006468">
    <property type="protein sequence ID" value="AAL23223.1"/>
    <property type="molecule type" value="Genomic_DNA"/>
</dbReference>
<dbReference type="EMBL" id="X54009">
    <property type="protein sequence ID" value="CAA37956.1"/>
    <property type="molecule type" value="Genomic_DNA"/>
</dbReference>
<dbReference type="PIR" id="S11915">
    <property type="entry name" value="S11915"/>
</dbReference>
<dbReference type="RefSeq" id="NP_463264.1">
    <property type="nucleotide sequence ID" value="NC_003197.2"/>
</dbReference>
<dbReference type="RefSeq" id="WP_000589395.1">
    <property type="nucleotide sequence ID" value="NC_003197.2"/>
</dbReference>
<dbReference type="SMR" id="P26265"/>
<dbReference type="STRING" id="99287.STM4403"/>
<dbReference type="PaxDb" id="99287-STM4403"/>
<dbReference type="GeneID" id="1255929"/>
<dbReference type="KEGG" id="stm:STM4403"/>
<dbReference type="PATRIC" id="fig|99287.12.peg.4628"/>
<dbReference type="HOGENOM" id="CLU_005854_4_1_6"/>
<dbReference type="OMA" id="EKAQYPM"/>
<dbReference type="PhylomeDB" id="P26265"/>
<dbReference type="BioCyc" id="SENT99287:STM4403-MONOMER"/>
<dbReference type="Proteomes" id="UP000001014">
    <property type="component" value="Chromosome"/>
</dbReference>
<dbReference type="GO" id="GO:0030288">
    <property type="term" value="C:outer membrane-bounded periplasmic space"/>
    <property type="evidence" value="ECO:0000318"/>
    <property type="project" value="GO_Central"/>
</dbReference>
<dbReference type="GO" id="GO:0008663">
    <property type="term" value="F:2',3'-cyclic-nucleotide 2'-phosphodiesterase activity"/>
    <property type="evidence" value="ECO:0007669"/>
    <property type="project" value="UniProtKB-EC"/>
</dbReference>
<dbReference type="GO" id="GO:0008254">
    <property type="term" value="F:3'-nucleotidase activity"/>
    <property type="evidence" value="ECO:0007669"/>
    <property type="project" value="UniProtKB-EC"/>
</dbReference>
<dbReference type="GO" id="GO:0046872">
    <property type="term" value="F:metal ion binding"/>
    <property type="evidence" value="ECO:0007669"/>
    <property type="project" value="UniProtKB-KW"/>
</dbReference>
<dbReference type="GO" id="GO:0000166">
    <property type="term" value="F:nucleotide binding"/>
    <property type="evidence" value="ECO:0007669"/>
    <property type="project" value="UniProtKB-KW"/>
</dbReference>
<dbReference type="GO" id="GO:0009166">
    <property type="term" value="P:nucleotide catabolic process"/>
    <property type="evidence" value="ECO:0007669"/>
    <property type="project" value="InterPro"/>
</dbReference>
<dbReference type="CDD" id="cd07410">
    <property type="entry name" value="MPP_CpdB_N"/>
    <property type="match status" value="1"/>
</dbReference>
<dbReference type="FunFam" id="3.60.21.10:FF:000037">
    <property type="entry name" value="Bifunctional 2',3'-cyclic-nucleotide 2'-phosphodiesterase/3'-nucleotidase"/>
    <property type="match status" value="1"/>
</dbReference>
<dbReference type="FunFam" id="3.90.780.10:FF:000002">
    <property type="entry name" value="Bifunctional 2',3'-cyclic-nucleotide 2'-phosphodiesterase/3'-nucleotidase"/>
    <property type="match status" value="1"/>
</dbReference>
<dbReference type="Gene3D" id="3.60.21.10">
    <property type="match status" value="1"/>
</dbReference>
<dbReference type="Gene3D" id="3.90.780.10">
    <property type="entry name" value="5'-Nucleotidase, C-terminal domain"/>
    <property type="match status" value="1"/>
</dbReference>
<dbReference type="InterPro" id="IPR008334">
    <property type="entry name" value="5'-Nucleotdase_C"/>
</dbReference>
<dbReference type="InterPro" id="IPR036907">
    <property type="entry name" value="5'-Nucleotdase_C_sf"/>
</dbReference>
<dbReference type="InterPro" id="IPR006146">
    <property type="entry name" value="5'-Nucleotdase_CS"/>
</dbReference>
<dbReference type="InterPro" id="IPR006179">
    <property type="entry name" value="5_nucleotidase/apyrase"/>
</dbReference>
<dbReference type="InterPro" id="IPR004843">
    <property type="entry name" value="Calcineurin-like_PHP_ApaH"/>
</dbReference>
<dbReference type="InterPro" id="IPR041827">
    <property type="entry name" value="CpdB_N"/>
</dbReference>
<dbReference type="InterPro" id="IPR006294">
    <property type="entry name" value="Cyc_nuc_PDE_nucleotidase"/>
</dbReference>
<dbReference type="InterPro" id="IPR029052">
    <property type="entry name" value="Metallo-depent_PP-like"/>
</dbReference>
<dbReference type="NCBIfam" id="TIGR01390">
    <property type="entry name" value="CycNucDiestase"/>
    <property type="match status" value="1"/>
</dbReference>
<dbReference type="NCBIfam" id="NF006938">
    <property type="entry name" value="PRK09420.1"/>
    <property type="match status" value="1"/>
</dbReference>
<dbReference type="PANTHER" id="PTHR11575:SF6">
    <property type="entry name" value="2',3'-CYCLIC-NUCLEOTIDE 2'-PHOSPHODIESTERASE_3'-NUCLEOTIDASE"/>
    <property type="match status" value="1"/>
</dbReference>
<dbReference type="PANTHER" id="PTHR11575">
    <property type="entry name" value="5'-NUCLEOTIDASE-RELATED"/>
    <property type="match status" value="1"/>
</dbReference>
<dbReference type="Pfam" id="PF02872">
    <property type="entry name" value="5_nucleotid_C"/>
    <property type="match status" value="1"/>
</dbReference>
<dbReference type="Pfam" id="PF00149">
    <property type="entry name" value="Metallophos"/>
    <property type="match status" value="1"/>
</dbReference>
<dbReference type="PRINTS" id="PR01607">
    <property type="entry name" value="APYRASEFAMLY"/>
</dbReference>
<dbReference type="SUPFAM" id="SSF55816">
    <property type="entry name" value="5'-nucleotidase (syn. UDP-sugar hydrolase), C-terminal domain"/>
    <property type="match status" value="1"/>
</dbReference>
<dbReference type="SUPFAM" id="SSF56300">
    <property type="entry name" value="Metallo-dependent phosphatases"/>
    <property type="match status" value="1"/>
</dbReference>
<dbReference type="PROSITE" id="PS00785">
    <property type="entry name" value="5_NUCLEOTIDASE_1"/>
    <property type="match status" value="1"/>
</dbReference>
<dbReference type="PROSITE" id="PS00786">
    <property type="entry name" value="5_NUCLEOTIDASE_2"/>
    <property type="match status" value="1"/>
</dbReference>
<organism>
    <name type="scientific">Salmonella typhimurium (strain LT2 / SGSC1412 / ATCC 700720)</name>
    <dbReference type="NCBI Taxonomy" id="99287"/>
    <lineage>
        <taxon>Bacteria</taxon>
        <taxon>Pseudomonadati</taxon>
        <taxon>Pseudomonadota</taxon>
        <taxon>Gammaproteobacteria</taxon>
        <taxon>Enterobacterales</taxon>
        <taxon>Enterobacteriaceae</taxon>
        <taxon>Salmonella</taxon>
    </lineage>
</organism>
<name>CPDB_SALTY</name>
<evidence type="ECO:0000250" key="1"/>
<evidence type="ECO:0000255" key="2"/>
<evidence type="ECO:0000305" key="3"/>
<protein>
    <recommendedName>
        <fullName>2',3'-cyclic-nucleotide 2'-phosphodiesterase/3'-nucleotidase</fullName>
        <ecNumber>3.1.3.6</ecNumber>
        <ecNumber>3.1.4.16</ecNumber>
    </recommendedName>
</protein>
<proteinExistence type="inferred from homology"/>
<gene>
    <name type="primary">cpdB</name>
    <name type="ordered locus">STM4403</name>
</gene>
<reference key="1">
    <citation type="journal article" date="2001" name="Nature">
        <title>Complete genome sequence of Salmonella enterica serovar Typhimurium LT2.</title>
        <authorList>
            <person name="McClelland M."/>
            <person name="Sanderson K.E."/>
            <person name="Spieth J."/>
            <person name="Clifton S.W."/>
            <person name="Latreille P."/>
            <person name="Courtney L."/>
            <person name="Porwollik S."/>
            <person name="Ali J."/>
            <person name="Dante M."/>
            <person name="Du F."/>
            <person name="Hou S."/>
            <person name="Layman D."/>
            <person name="Leonard S."/>
            <person name="Nguyen C."/>
            <person name="Scott K."/>
            <person name="Holmes A."/>
            <person name="Grewal N."/>
            <person name="Mulvaney E."/>
            <person name="Ryan E."/>
            <person name="Sun H."/>
            <person name="Florea L."/>
            <person name="Miller W."/>
            <person name="Stoneking T."/>
            <person name="Nhan M."/>
            <person name="Waterston R."/>
            <person name="Wilson R.K."/>
        </authorList>
    </citation>
    <scope>NUCLEOTIDE SEQUENCE [LARGE SCALE GENOMIC DNA]</scope>
    <source>
        <strain>LT2 / SGSC1412 / ATCC 700720</strain>
    </source>
</reference>
<reference key="2">
    <citation type="journal article" date="1990" name="Mol. Gen. Genet.">
        <title>Transcription and regulation of the cpdB gene in Escherichia coli K12 and Salmonella typhimurium LT2: evidence for modulation of constitutive promoters by cyclic AMP-CRP complex.</title>
        <authorList>
            <person name="Liu J."/>
            <person name="Beacham I.R."/>
        </authorList>
    </citation>
    <scope>NUCLEOTIDE SEQUENCE [GENOMIC DNA] OF 1-251</scope>
    <source>
        <strain>LT2</strain>
    </source>
</reference>
<comment type="function">
    <text>This bifunctional enzyme catalyzes two consecutive reactions during ribonucleic acid degradation. Converts a 2',3'-cyclic nucleotide to a 3'-nucleotide and then the 3'-nucleotide to the corresponding nucleoside and phosphate.</text>
</comment>
<comment type="catalytic activity">
    <reaction>
        <text>a nucleoside 2',3'-cyclic phosphate + H2O = a nucleoside 3'-phosphate + H(+)</text>
        <dbReference type="Rhea" id="RHEA:19621"/>
        <dbReference type="ChEBI" id="CHEBI:15377"/>
        <dbReference type="ChEBI" id="CHEBI:15378"/>
        <dbReference type="ChEBI" id="CHEBI:66949"/>
        <dbReference type="ChEBI" id="CHEBI:66954"/>
        <dbReference type="EC" id="3.1.4.16"/>
    </reaction>
</comment>
<comment type="catalytic activity">
    <reaction>
        <text>a ribonucleoside 3'-phosphate + H2O = a ribonucleoside + phosphate</text>
        <dbReference type="Rhea" id="RHEA:10144"/>
        <dbReference type="ChEBI" id="CHEBI:13197"/>
        <dbReference type="ChEBI" id="CHEBI:15377"/>
        <dbReference type="ChEBI" id="CHEBI:18254"/>
        <dbReference type="ChEBI" id="CHEBI:43474"/>
        <dbReference type="EC" id="3.1.3.6"/>
    </reaction>
</comment>
<comment type="cofactor">
    <cofactor evidence="1">
        <name>a divalent metal cation</name>
        <dbReference type="ChEBI" id="CHEBI:60240"/>
    </cofactor>
</comment>
<comment type="subcellular location">
    <subcellularLocation>
        <location>Periplasm</location>
    </subcellularLocation>
</comment>
<comment type="miscellaneous">
    <text>Two kinetically distinguishable active sites for the two substrates (2',3'-cyclic nucleotides and 3'-nucleotides) have been identified.</text>
</comment>
<comment type="similarity">
    <text evidence="3">Belongs to the 5'-nucleotidase family.</text>
</comment>
<sequence>MIKFSATLLATLIAASVNAATVDLRIMETTDLHSNMMDFDYYKDTATEKFGLVRTASLIHAARNEVKNSVLVDNGDLIQGSPLGDYMAAKGLKDGDVHPVYKALNTLDYAVGNLGNHEFNYGLDYLHNALAGAKFPYVNANIIDVKTQKPLFTPYLIKETSVIDKDGNPQTLKIGYIGFVPPQIMIWDKANLSGKVTVNDITETARKYVPEMREKGADIVVVIAHSGLSADPYHSMAENSVYYLSEVPGVDAIMFGHAHAVFPGKDFADIKGADIAKGTLNGIPAVMPGMWGDHLGVVDLVLNNDSGKWQVTQAKAEARPIYDAAAKKSLAAEDSKLVGILKADHDATREFVSKPIGKSADNMYSYLALVQDDPTVQVVNNAQKAYVEHFIQGDPDLAKLPVLSAAAPFKVGGRKNDPASFVEVEKGQLTFRNAADLYLYPNTLVVVKASGKEVKEWLECSAGQFNQIDIHSNKPQSLINWDGFRTYNFDVIDGVNYQIDVSQPARYDGECQMVNPQAERIKNLTFNGKPVDPNATFLVATNNYRAYGGKFAGTGDSHIAFASPDENRAVLAAWIGAESKRAGEIHPAADNNWRLAPIHSDTALDIRFETSPGDKAAAFIKAKGQYPMKKVAVDDIGFAIYQVDLSK</sequence>